<feature type="chain" id="PRO_0000121314" description="Ypt/Rab-type GTPase ypt71">
    <location>
        <begin position="1"/>
        <end position="208"/>
    </location>
</feature>
<feature type="short sequence motif" description="Effector region" evidence="1">
    <location>
        <begin position="37"/>
        <end position="45"/>
    </location>
</feature>
<feature type="binding site" evidence="1">
    <location>
        <begin position="17"/>
        <end position="23"/>
    </location>
    <ligand>
        <name>GTP</name>
        <dbReference type="ChEBI" id="CHEBI:37565"/>
    </ligand>
</feature>
<feature type="binding site" evidence="1">
    <location>
        <begin position="33"/>
        <end position="40"/>
    </location>
    <ligand>
        <name>GTP</name>
        <dbReference type="ChEBI" id="CHEBI:37565"/>
    </ligand>
</feature>
<feature type="binding site" evidence="1">
    <location>
        <position position="66"/>
    </location>
    <ligand>
        <name>GTP</name>
        <dbReference type="ChEBI" id="CHEBI:37565"/>
    </ligand>
</feature>
<feature type="binding site" evidence="1">
    <location>
        <begin position="124"/>
        <end position="127"/>
    </location>
    <ligand>
        <name>GTP</name>
        <dbReference type="ChEBI" id="CHEBI:37565"/>
    </ligand>
</feature>
<feature type="binding site" evidence="1">
    <location>
        <begin position="158"/>
        <end position="160"/>
    </location>
    <ligand>
        <name>GTP</name>
        <dbReference type="ChEBI" id="CHEBI:37565"/>
    </ligand>
</feature>
<feature type="modified residue" description="Cysteine methyl ester" evidence="2">
    <location>
        <position position="208"/>
    </location>
</feature>
<feature type="lipid moiety-binding region" description="S-geranylgeranyl cysteine" evidence="2">
    <location>
        <position position="206"/>
    </location>
</feature>
<feature type="lipid moiety-binding region" description="S-geranylgeranyl cysteine" evidence="2">
    <location>
        <position position="208"/>
    </location>
</feature>
<dbReference type="EMBL" id="CU329670">
    <property type="protein sequence ID" value="CAC21483.1"/>
    <property type="molecule type" value="Genomic_DNA"/>
</dbReference>
<dbReference type="RefSeq" id="NP_593524.1">
    <property type="nucleotide sequence ID" value="NM_001018958.2"/>
</dbReference>
<dbReference type="SMR" id="Q9HDY0"/>
<dbReference type="BioGRID" id="279833">
    <property type="interactions" value="7"/>
</dbReference>
<dbReference type="FunCoup" id="Q9HDY0">
    <property type="interactions" value="109"/>
</dbReference>
<dbReference type="STRING" id="284812.Q9HDY0"/>
<dbReference type="iPTMnet" id="Q9HDY0"/>
<dbReference type="PaxDb" id="4896-SPAPB1A10.10c.1"/>
<dbReference type="EnsemblFungi" id="SPAPB1A10.10c.1">
    <property type="protein sequence ID" value="SPAPB1A10.10c.1:pep"/>
    <property type="gene ID" value="SPAPB1A10.10c"/>
</dbReference>
<dbReference type="GeneID" id="2543411"/>
<dbReference type="KEGG" id="spo:2543411"/>
<dbReference type="PomBase" id="SPAPB1A10.10c">
    <property type="gene designation" value="ypt71"/>
</dbReference>
<dbReference type="VEuPathDB" id="FungiDB:SPAPB1A10.10c"/>
<dbReference type="eggNOG" id="KOG0394">
    <property type="taxonomic scope" value="Eukaryota"/>
</dbReference>
<dbReference type="HOGENOM" id="CLU_041217_10_6_1"/>
<dbReference type="InParanoid" id="Q9HDY0"/>
<dbReference type="OMA" id="DCCVIVY"/>
<dbReference type="PhylomeDB" id="Q9HDY0"/>
<dbReference type="Reactome" id="R-SPO-6798695">
    <property type="pathway name" value="Neutrophil degranulation"/>
</dbReference>
<dbReference type="Reactome" id="R-SPO-8854214">
    <property type="pathway name" value="TBC/RABGAPs"/>
</dbReference>
<dbReference type="Reactome" id="R-SPO-8873719">
    <property type="pathway name" value="RAB geranylgeranylation"/>
</dbReference>
<dbReference type="PRO" id="PR:Q9HDY0"/>
<dbReference type="Proteomes" id="UP000002485">
    <property type="component" value="Chromosome I"/>
</dbReference>
<dbReference type="GO" id="GO:0005829">
    <property type="term" value="C:cytosol"/>
    <property type="evidence" value="ECO:0007005"/>
    <property type="project" value="PomBase"/>
</dbReference>
<dbReference type="GO" id="GO:0000329">
    <property type="term" value="C:fungal-type vacuole membrane"/>
    <property type="evidence" value="ECO:0000314"/>
    <property type="project" value="PomBase"/>
</dbReference>
<dbReference type="GO" id="GO:0005770">
    <property type="term" value="C:late endosome"/>
    <property type="evidence" value="ECO:0000318"/>
    <property type="project" value="GO_Central"/>
</dbReference>
<dbReference type="GO" id="GO:0005634">
    <property type="term" value="C:nucleus"/>
    <property type="evidence" value="ECO:0007005"/>
    <property type="project" value="PomBase"/>
</dbReference>
<dbReference type="GO" id="GO:0005774">
    <property type="term" value="C:vacuolar membrane"/>
    <property type="evidence" value="ECO:0000269"/>
    <property type="project" value="PomBase"/>
</dbReference>
<dbReference type="GO" id="GO:0005773">
    <property type="term" value="C:vacuole"/>
    <property type="evidence" value="ECO:0000318"/>
    <property type="project" value="GO_Central"/>
</dbReference>
<dbReference type="GO" id="GO:0005525">
    <property type="term" value="F:GTP binding"/>
    <property type="evidence" value="ECO:0007669"/>
    <property type="project" value="UniProtKB-KW"/>
</dbReference>
<dbReference type="GO" id="GO:0003924">
    <property type="term" value="F:GTPase activity"/>
    <property type="evidence" value="ECO:0000266"/>
    <property type="project" value="PomBase"/>
</dbReference>
<dbReference type="GO" id="GO:0006897">
    <property type="term" value="P:endocytosis"/>
    <property type="evidence" value="ECO:0000266"/>
    <property type="project" value="PomBase"/>
</dbReference>
<dbReference type="GO" id="GO:0006896">
    <property type="term" value="P:Golgi to vacuole transport"/>
    <property type="evidence" value="ECO:0000266"/>
    <property type="project" value="PomBase"/>
</dbReference>
<dbReference type="GO" id="GO:0006886">
    <property type="term" value="P:intracellular protein transport"/>
    <property type="evidence" value="ECO:0000305"/>
    <property type="project" value="PomBase"/>
</dbReference>
<dbReference type="GO" id="GO:1904262">
    <property type="term" value="P:negative regulation of TORC1 signaling"/>
    <property type="evidence" value="ECO:0000315"/>
    <property type="project" value="PomBase"/>
</dbReference>
<dbReference type="GO" id="GO:0061192">
    <property type="term" value="P:negative regulation of vacuole fusion, non-autophagic"/>
    <property type="evidence" value="ECO:0000315"/>
    <property type="project" value="PomBase"/>
</dbReference>
<dbReference type="GO" id="GO:0032889">
    <property type="term" value="P:regulation of vacuole fusion, non-autophagic"/>
    <property type="evidence" value="ECO:0000318"/>
    <property type="project" value="GO_Central"/>
</dbReference>
<dbReference type="CDD" id="cd01862">
    <property type="entry name" value="Rab7"/>
    <property type="match status" value="1"/>
</dbReference>
<dbReference type="FunFam" id="3.40.50.300:FF:000086">
    <property type="entry name" value="Ras-related small GTPase"/>
    <property type="match status" value="1"/>
</dbReference>
<dbReference type="Gene3D" id="3.40.50.300">
    <property type="entry name" value="P-loop containing nucleotide triphosphate hydrolases"/>
    <property type="match status" value="1"/>
</dbReference>
<dbReference type="InterPro" id="IPR027417">
    <property type="entry name" value="P-loop_NTPase"/>
</dbReference>
<dbReference type="InterPro" id="IPR005225">
    <property type="entry name" value="Small_GTP-bd"/>
</dbReference>
<dbReference type="InterPro" id="IPR001806">
    <property type="entry name" value="Small_GTPase"/>
</dbReference>
<dbReference type="NCBIfam" id="TIGR00231">
    <property type="entry name" value="small_GTP"/>
    <property type="match status" value="1"/>
</dbReference>
<dbReference type="PANTHER" id="PTHR47981">
    <property type="entry name" value="RAB FAMILY"/>
    <property type="match status" value="1"/>
</dbReference>
<dbReference type="PANTHER" id="PTHR47981:SF38">
    <property type="entry name" value="YPT_RAB-TYPE GTPASE YPT71"/>
    <property type="match status" value="1"/>
</dbReference>
<dbReference type="Pfam" id="PF00071">
    <property type="entry name" value="Ras"/>
    <property type="match status" value="1"/>
</dbReference>
<dbReference type="PRINTS" id="PR00449">
    <property type="entry name" value="RASTRNSFRMNG"/>
</dbReference>
<dbReference type="SMART" id="SM00175">
    <property type="entry name" value="RAB"/>
    <property type="match status" value="1"/>
</dbReference>
<dbReference type="SMART" id="SM00176">
    <property type="entry name" value="RAN"/>
    <property type="match status" value="1"/>
</dbReference>
<dbReference type="SMART" id="SM00173">
    <property type="entry name" value="RAS"/>
    <property type="match status" value="1"/>
</dbReference>
<dbReference type="SMART" id="SM00174">
    <property type="entry name" value="RHO"/>
    <property type="match status" value="1"/>
</dbReference>
<dbReference type="SUPFAM" id="SSF52540">
    <property type="entry name" value="P-loop containing nucleoside triphosphate hydrolases"/>
    <property type="match status" value="1"/>
</dbReference>
<dbReference type="PROSITE" id="PS51419">
    <property type="entry name" value="RAB"/>
    <property type="match status" value="1"/>
</dbReference>
<comment type="function">
    <text evidence="1 3">Ypt/Rab-type GTPases are key regulators of membrane trafficking and intracellular vesicular transport. They act as molecular switches that convert between GTP-bound and GDP-bound states, and regulate virtually all steps of membrane traffic from the formation of the transport vesicle at the donor membrane to its fusion at the target membrane. In the GDP-bound state, Ypt proteins are predominantly cytosolic, solubilized through the interaction with a GDP dissociation inhibitor (GDI). In the GTP-bound state, the proteins are membrane bound and interact with specific effector proteins that select cargo, promote vesicle movement, or verify the correct site of fusion (By similarity). Act antagonistically to ypt7 in regulating vacuolar morphology, promoting vacuolar fission (PubMed:19453973).</text>
</comment>
<comment type="activity regulation">
    <text evidence="1">Rab activation is generally mediated by a guanine exchange factor (GEF), while inactivation through hydrolysis of bound GTP is catalyzed by a GTPase activating protein (GAP).</text>
</comment>
<comment type="subcellular location">
    <subcellularLocation>
        <location evidence="3">Vacuole membrane</location>
    </subcellularLocation>
</comment>
<comment type="disruption phenotype">
    <text evidence="3">Contains large vacuoles.</text>
</comment>
<comment type="similarity">
    <text evidence="4">Belongs to the small GTPase superfamily. Rab family.</text>
</comment>
<organism>
    <name type="scientific">Schizosaccharomyces pombe (strain 972 / ATCC 24843)</name>
    <name type="common">Fission yeast</name>
    <dbReference type="NCBI Taxonomy" id="284812"/>
    <lineage>
        <taxon>Eukaryota</taxon>
        <taxon>Fungi</taxon>
        <taxon>Dikarya</taxon>
        <taxon>Ascomycota</taxon>
        <taxon>Taphrinomycotina</taxon>
        <taxon>Schizosaccharomycetes</taxon>
        <taxon>Schizosaccharomycetales</taxon>
        <taxon>Schizosaccharomycetaceae</taxon>
        <taxon>Schizosaccharomyces</taxon>
    </lineage>
</organism>
<evidence type="ECO:0000250" key="1">
    <source>
        <dbReference type="UniProtKB" id="P32939"/>
    </source>
</evidence>
<evidence type="ECO:0000250" key="2">
    <source>
        <dbReference type="UniProtKB" id="P36586"/>
    </source>
</evidence>
<evidence type="ECO:0000269" key="3">
    <source>
    </source>
</evidence>
<evidence type="ECO:0000305" key="4"/>
<sequence>MSAQKRVFLKVVILGDSGVGKTCLMNQFVNQKFSREYKATIGADFLTKDVVVDDKLVTLQLWDTAGQERFQSLGMAFYRGADCCVIVYNVNNSKSFDSVENWRQEFLYQTSQDECAFPFIIVGNQIDKDASKRAVSLHRALDYCKSKHGSNMIHFEASAKENTNVTDLFETVSRLALENESSRDDFVNDFSEPLLLSKPLNNTSSCNC</sequence>
<accession>Q9HDY0</accession>
<keyword id="KW-0342">GTP-binding</keyword>
<keyword id="KW-0449">Lipoprotein</keyword>
<keyword id="KW-0472">Membrane</keyword>
<keyword id="KW-0488">Methylation</keyword>
<keyword id="KW-0547">Nucleotide-binding</keyword>
<keyword id="KW-0636">Prenylation</keyword>
<keyword id="KW-0653">Protein transport</keyword>
<keyword id="KW-1185">Reference proteome</keyword>
<keyword id="KW-0813">Transport</keyword>
<keyword id="KW-0926">Vacuole</keyword>
<protein>
    <recommendedName>
        <fullName>Ypt/Rab-type GTPase ypt71</fullName>
    </recommendedName>
</protein>
<name>YPT71_SCHPO</name>
<proteinExistence type="inferred from homology"/>
<reference key="1">
    <citation type="journal article" date="2002" name="Nature">
        <title>The genome sequence of Schizosaccharomyces pombe.</title>
        <authorList>
            <person name="Wood V."/>
            <person name="Gwilliam R."/>
            <person name="Rajandream M.A."/>
            <person name="Lyne M.H."/>
            <person name="Lyne R."/>
            <person name="Stewart A."/>
            <person name="Sgouros J.G."/>
            <person name="Peat N."/>
            <person name="Hayles J."/>
            <person name="Baker S.G."/>
            <person name="Basham D."/>
            <person name="Bowman S."/>
            <person name="Brooks K."/>
            <person name="Brown D."/>
            <person name="Brown S."/>
            <person name="Chillingworth T."/>
            <person name="Churcher C.M."/>
            <person name="Collins M."/>
            <person name="Connor R."/>
            <person name="Cronin A."/>
            <person name="Davis P."/>
            <person name="Feltwell T."/>
            <person name="Fraser A."/>
            <person name="Gentles S."/>
            <person name="Goble A."/>
            <person name="Hamlin N."/>
            <person name="Harris D.E."/>
            <person name="Hidalgo J."/>
            <person name="Hodgson G."/>
            <person name="Holroyd S."/>
            <person name="Hornsby T."/>
            <person name="Howarth S."/>
            <person name="Huckle E.J."/>
            <person name="Hunt S."/>
            <person name="Jagels K."/>
            <person name="James K.D."/>
            <person name="Jones L."/>
            <person name="Jones M."/>
            <person name="Leather S."/>
            <person name="McDonald S."/>
            <person name="McLean J."/>
            <person name="Mooney P."/>
            <person name="Moule S."/>
            <person name="Mungall K.L."/>
            <person name="Murphy L.D."/>
            <person name="Niblett D."/>
            <person name="Odell C."/>
            <person name="Oliver K."/>
            <person name="O'Neil S."/>
            <person name="Pearson D."/>
            <person name="Quail M.A."/>
            <person name="Rabbinowitsch E."/>
            <person name="Rutherford K.M."/>
            <person name="Rutter S."/>
            <person name="Saunders D."/>
            <person name="Seeger K."/>
            <person name="Sharp S."/>
            <person name="Skelton J."/>
            <person name="Simmonds M.N."/>
            <person name="Squares R."/>
            <person name="Squares S."/>
            <person name="Stevens K."/>
            <person name="Taylor K."/>
            <person name="Taylor R.G."/>
            <person name="Tivey A."/>
            <person name="Walsh S.V."/>
            <person name="Warren T."/>
            <person name="Whitehead S."/>
            <person name="Woodward J.R."/>
            <person name="Volckaert G."/>
            <person name="Aert R."/>
            <person name="Robben J."/>
            <person name="Grymonprez B."/>
            <person name="Weltjens I."/>
            <person name="Vanstreels E."/>
            <person name="Rieger M."/>
            <person name="Schaefer M."/>
            <person name="Mueller-Auer S."/>
            <person name="Gabel C."/>
            <person name="Fuchs M."/>
            <person name="Duesterhoeft A."/>
            <person name="Fritzc C."/>
            <person name="Holzer E."/>
            <person name="Moestl D."/>
            <person name="Hilbert H."/>
            <person name="Borzym K."/>
            <person name="Langer I."/>
            <person name="Beck A."/>
            <person name="Lehrach H."/>
            <person name="Reinhardt R."/>
            <person name="Pohl T.M."/>
            <person name="Eger P."/>
            <person name="Zimmermann W."/>
            <person name="Wedler H."/>
            <person name="Wambutt R."/>
            <person name="Purnelle B."/>
            <person name="Goffeau A."/>
            <person name="Cadieu E."/>
            <person name="Dreano S."/>
            <person name="Gloux S."/>
            <person name="Lelaure V."/>
            <person name="Mottier S."/>
            <person name="Galibert F."/>
            <person name="Aves S.J."/>
            <person name="Xiang Z."/>
            <person name="Hunt C."/>
            <person name="Moore K."/>
            <person name="Hurst S.M."/>
            <person name="Lucas M."/>
            <person name="Rochet M."/>
            <person name="Gaillardin C."/>
            <person name="Tallada V.A."/>
            <person name="Garzon A."/>
            <person name="Thode G."/>
            <person name="Daga R.R."/>
            <person name="Cruzado L."/>
            <person name="Jimenez J."/>
            <person name="Sanchez M."/>
            <person name="del Rey F."/>
            <person name="Benito J."/>
            <person name="Dominguez A."/>
            <person name="Revuelta J.L."/>
            <person name="Moreno S."/>
            <person name="Armstrong J."/>
            <person name="Forsburg S.L."/>
            <person name="Cerutti L."/>
            <person name="Lowe T."/>
            <person name="McCombie W.R."/>
            <person name="Paulsen I."/>
            <person name="Potashkin J."/>
            <person name="Shpakovski G.V."/>
            <person name="Ussery D."/>
            <person name="Barrell B.G."/>
            <person name="Nurse P."/>
        </authorList>
    </citation>
    <scope>NUCLEOTIDE SEQUENCE [LARGE SCALE GENOMIC DNA]</scope>
    <source>
        <strain>972 / ATCC 24843</strain>
    </source>
</reference>
<reference key="2">
    <citation type="journal article" date="2009" name="Traffic">
        <title>Two fission yeast rab7 homologs, ypt7 and ypt71, play antagonistic roles in the regulation of vacuolar morphology.</title>
        <authorList>
            <person name="Kashiwazaki J."/>
            <person name="Iwaki T."/>
            <person name="Takegawa K."/>
            <person name="Shimoda C."/>
            <person name="Nakamura T."/>
        </authorList>
    </citation>
    <scope>FUNCTION</scope>
    <scope>SUBCELLULAR LOCATION</scope>
    <scope>DISRUPTION PHENOTYPE</scope>
</reference>
<gene>
    <name type="primary">ypt71</name>
    <name type="ORF">SPAPB1A10.10c</name>
</gene>